<name>RNP2_METKA</name>
<accession>Q8TYB6</accession>
<protein>
    <recommendedName>
        <fullName evidence="1">Ribonuclease P protein component 2</fullName>
        <shortName evidence="1">RNase P component 2</shortName>
        <ecNumber evidence="1">3.1.26.5</ecNumber>
    </recommendedName>
    <alternativeName>
        <fullName evidence="1">Pop5</fullName>
    </alternativeName>
</protein>
<feature type="chain" id="PRO_0000140021" description="Ribonuclease P protein component 2">
    <location>
        <begin position="1"/>
        <end position="161"/>
    </location>
</feature>
<proteinExistence type="inferred from homology"/>
<comment type="function">
    <text evidence="1">Part of ribonuclease P, a protein complex that generates mature tRNA molecules by cleaving their 5'-ends.</text>
</comment>
<comment type="catalytic activity">
    <reaction evidence="1">
        <text>Endonucleolytic cleavage of RNA, removing 5'-extranucleotides from tRNA precursor.</text>
        <dbReference type="EC" id="3.1.26.5"/>
    </reaction>
</comment>
<comment type="subunit">
    <text evidence="1">Consists of a catalytic RNA component and at least 4-5 protein subunits.</text>
</comment>
<comment type="subcellular location">
    <subcellularLocation>
        <location evidence="1">Cytoplasm</location>
    </subcellularLocation>
</comment>
<comment type="similarity">
    <text evidence="1">Belongs to the eukaryotic/archaeal RNase P protein component 2 family.</text>
</comment>
<comment type="sequence caution" evidence="2">
    <conflict type="erroneous initiation">
        <sequence resource="EMBL-CDS" id="AAM01601"/>
    </conflict>
    <text>Extended N-terminus.</text>
</comment>
<organism>
    <name type="scientific">Methanopyrus kandleri (strain AV19 / DSM 6324 / JCM 9639 / NBRC 100938)</name>
    <dbReference type="NCBI Taxonomy" id="190192"/>
    <lineage>
        <taxon>Archaea</taxon>
        <taxon>Methanobacteriati</taxon>
        <taxon>Methanobacteriota</taxon>
        <taxon>Methanomada group</taxon>
        <taxon>Methanopyri</taxon>
        <taxon>Methanopyrales</taxon>
        <taxon>Methanopyraceae</taxon>
        <taxon>Methanopyrus</taxon>
    </lineage>
</organism>
<gene>
    <name evidence="1" type="primary">rnp2</name>
    <name type="ordered locus">MK0386</name>
</gene>
<keyword id="KW-0963">Cytoplasm</keyword>
<keyword id="KW-0255">Endonuclease</keyword>
<keyword id="KW-0378">Hydrolase</keyword>
<keyword id="KW-0540">Nuclease</keyword>
<keyword id="KW-1185">Reference proteome</keyword>
<keyword id="KW-0819">tRNA processing</keyword>
<sequence>MRVRLSSALRPRWRYVTFKVWSERVEALDFGGMKDLVVRALLSVLGPTGTGRIGPWLVRSYRDLNAGILRVRRGQEEEARAALSLYRRDPKLGRVFIEVLGTSGTIKGAERYLSRIPKWDRERVGNREFVLYENGEVDVVEDGRIVAFASFECPLPEENRG</sequence>
<evidence type="ECO:0000255" key="1">
    <source>
        <dbReference type="HAMAP-Rule" id="MF_00755"/>
    </source>
</evidence>
<evidence type="ECO:0000305" key="2"/>
<reference key="1">
    <citation type="journal article" date="2002" name="Proc. Natl. Acad. Sci. U.S.A.">
        <title>The complete genome of hyperthermophile Methanopyrus kandleri AV19 and monophyly of archaeal methanogens.</title>
        <authorList>
            <person name="Slesarev A.I."/>
            <person name="Mezhevaya K.V."/>
            <person name="Makarova K.S."/>
            <person name="Polushin N.N."/>
            <person name="Shcherbinina O.V."/>
            <person name="Shakhova V.V."/>
            <person name="Belova G.I."/>
            <person name="Aravind L."/>
            <person name="Natale D.A."/>
            <person name="Rogozin I.B."/>
            <person name="Tatusov R.L."/>
            <person name="Wolf Y.I."/>
            <person name="Stetter K.O."/>
            <person name="Malykh A.G."/>
            <person name="Koonin E.V."/>
            <person name="Kozyavkin S.A."/>
        </authorList>
    </citation>
    <scope>NUCLEOTIDE SEQUENCE [LARGE SCALE GENOMIC DNA]</scope>
    <source>
        <strain>AV19 / DSM 6324 / JCM 9639 / NBRC 100938</strain>
    </source>
</reference>
<dbReference type="EC" id="3.1.26.5" evidence="1"/>
<dbReference type="EMBL" id="AE009439">
    <property type="protein sequence ID" value="AAM01601.1"/>
    <property type="status" value="ALT_INIT"/>
    <property type="molecule type" value="Genomic_DNA"/>
</dbReference>
<dbReference type="RefSeq" id="WP_148679486.1">
    <property type="nucleotide sequence ID" value="NC_003551.1"/>
</dbReference>
<dbReference type="SMR" id="Q8TYB6"/>
<dbReference type="STRING" id="190192.MK0386"/>
<dbReference type="PaxDb" id="190192-MK0386"/>
<dbReference type="EnsemblBacteria" id="AAM01601">
    <property type="protein sequence ID" value="AAM01601"/>
    <property type="gene ID" value="MK0386"/>
</dbReference>
<dbReference type="GeneID" id="1477689"/>
<dbReference type="KEGG" id="mka:MK0386"/>
<dbReference type="HOGENOM" id="CLU_1615315_0_0_2"/>
<dbReference type="InParanoid" id="Q8TYB6"/>
<dbReference type="OrthoDB" id="372770at2157"/>
<dbReference type="Proteomes" id="UP000001826">
    <property type="component" value="Chromosome"/>
</dbReference>
<dbReference type="GO" id="GO:0005737">
    <property type="term" value="C:cytoplasm"/>
    <property type="evidence" value="ECO:0007669"/>
    <property type="project" value="UniProtKB-SubCell"/>
</dbReference>
<dbReference type="GO" id="GO:0030677">
    <property type="term" value="C:ribonuclease P complex"/>
    <property type="evidence" value="ECO:0007669"/>
    <property type="project" value="UniProtKB-UniRule"/>
</dbReference>
<dbReference type="GO" id="GO:0004526">
    <property type="term" value="F:ribonuclease P activity"/>
    <property type="evidence" value="ECO:0007669"/>
    <property type="project" value="UniProtKB-UniRule"/>
</dbReference>
<dbReference type="GO" id="GO:0001682">
    <property type="term" value="P:tRNA 5'-leader removal"/>
    <property type="evidence" value="ECO:0007669"/>
    <property type="project" value="UniProtKB-UniRule"/>
</dbReference>
<dbReference type="Gene3D" id="3.30.70.3250">
    <property type="entry name" value="Ribonuclease P, Pop5 subunit"/>
    <property type="match status" value="1"/>
</dbReference>
<dbReference type="HAMAP" id="MF_00755">
    <property type="entry name" value="RNase_P_2"/>
    <property type="match status" value="1"/>
</dbReference>
<dbReference type="InterPro" id="IPR002759">
    <property type="entry name" value="Pop5/Rpp14/Rnp2-like"/>
</dbReference>
<dbReference type="InterPro" id="IPR038085">
    <property type="entry name" value="Rnp2-like_sf"/>
</dbReference>
<dbReference type="Pfam" id="PF01900">
    <property type="entry name" value="RNase_P_Rpp14"/>
    <property type="match status" value="1"/>
</dbReference>
<dbReference type="SUPFAM" id="SSF160350">
    <property type="entry name" value="Rnp2-like"/>
    <property type="match status" value="1"/>
</dbReference>